<gene>
    <name type="primary">crtX</name>
    <name type="synonym">ugt101</name>
</gene>
<feature type="chain" id="PRO_0000074163" description="Zeaxanthin glucosyltransferase">
    <location>
        <begin position="1"/>
        <end position="431"/>
    </location>
</feature>
<sequence length="431" mass="47241">MSHFAAIAPPFYSHVRALQNLAQELVARGHRVTFIQQYDIKHLIDSETIGFHSVGTDSHPPGALTRVLHLAAHPLGPSMLKLINEMARTTDMLCRELPQAFNDLAVDGVIVDQMEPAGALVAEALGLPFISVACALPLNREPDMPLAVMPFEYGTSDAARERYAASEKIYDWLMRRHDRVIAEHSHRMGLAPRQKLHQCFSPLAQISQLVPELDFPRKALPACFHAVGPLRETHAPSTSSSRYFTSSEKPRIFASLGTLQGHRYGLFKTIVKACEEIDGQLLLAHCGRLTDSQCEELARSRHTQVVDFADQSAALSQAQLAITHGGMNTVLDAINYRTPLLALPLAFDQPGVASRIVYHGIGKRASRFTTSHALARQMRSLLTNVDFQQRMAKIQTALRLAGGTMAAADIIEQVMCTGQPVLSGSGYATAL</sequence>
<proteinExistence type="inferred from homology"/>
<name>CRTX_PANAN</name>
<keyword id="KW-0125">Carotenoid biosynthesis</keyword>
<keyword id="KW-0328">Glycosyltransferase</keyword>
<keyword id="KW-0808">Transferase</keyword>
<reference key="1">
    <citation type="journal article" date="1990" name="J. Bacteriol.">
        <title>Elucidation of the Erwinia uredovora carotenoid biosynthetic pathway by functional analysis of gene products expressed in Escherichia coli.</title>
        <authorList>
            <person name="Misawa N."/>
            <person name="Nakagawa M."/>
            <person name="Kobayashi K."/>
            <person name="Yamano S."/>
            <person name="Izawa Y."/>
            <person name="Nakamura K."/>
            <person name="Harashima K."/>
        </authorList>
    </citation>
    <scope>NUCLEOTIDE SEQUENCE [GENOMIC DNA]</scope>
    <source>
        <strain>ATCC 19321 / DSM 30080 / NCPPB 800 / NRRL B-14773 / 20D3</strain>
    </source>
</reference>
<comment type="function">
    <text>Catalyzes the glycosylation reaction which converts zeaxanthin to zeaxanthin bis(beta-D-glucoside). The reaction proceeds in two steps with the monoglucoside as an intermediate.</text>
</comment>
<comment type="catalytic activity">
    <reaction>
        <text>all-trans-zeaxanthin + 2 UDP-alpha-D-glucose = zeaxanthin bis(beta-D-glucoside) + 2 UDP + 2 H(+)</text>
        <dbReference type="Rhea" id="RHEA:31543"/>
        <dbReference type="ChEBI" id="CHEBI:15378"/>
        <dbReference type="ChEBI" id="CHEBI:27547"/>
        <dbReference type="ChEBI" id="CHEBI:58223"/>
        <dbReference type="ChEBI" id="CHEBI:58885"/>
        <dbReference type="ChEBI" id="CHEBI:63067"/>
        <dbReference type="EC" id="2.4.1.276"/>
    </reaction>
</comment>
<comment type="pathway">
    <text>Carotenoid biosynthesis; zeaxanthin diglucoside biosynthesis.</text>
</comment>
<comment type="similarity">
    <text evidence="1">Belongs to the UDP-glycosyltransferase family.</text>
</comment>
<dbReference type="EC" id="2.4.1.276"/>
<dbReference type="EMBL" id="D90087">
    <property type="protein sequence ID" value="BAA14125.1"/>
    <property type="molecule type" value="Genomic_DNA"/>
</dbReference>
<dbReference type="PIR" id="B37802">
    <property type="entry name" value="B37802"/>
</dbReference>
<dbReference type="RefSeq" id="WP_176017232.1">
    <property type="nucleotide sequence ID" value="NZ_CP054909.1"/>
</dbReference>
<dbReference type="SMR" id="P21686"/>
<dbReference type="CAZy" id="GT1">
    <property type="family name" value="Glycosyltransferase Family 1"/>
</dbReference>
<dbReference type="BRENDA" id="2.4.1.276">
    <property type="organism ID" value="2137"/>
</dbReference>
<dbReference type="UniPathway" id="UPA00798"/>
<dbReference type="GO" id="GO:0008194">
    <property type="term" value="F:UDP-glycosyltransferase activity"/>
    <property type="evidence" value="ECO:0007669"/>
    <property type="project" value="InterPro"/>
</dbReference>
<dbReference type="GO" id="GO:0016117">
    <property type="term" value="P:carotenoid biosynthetic process"/>
    <property type="evidence" value="ECO:0007669"/>
    <property type="project" value="UniProtKB-KW"/>
</dbReference>
<dbReference type="CDD" id="cd03784">
    <property type="entry name" value="GT1_Gtf-like"/>
    <property type="match status" value="1"/>
</dbReference>
<dbReference type="Gene3D" id="3.40.50.2000">
    <property type="entry name" value="Glycogen Phosphorylase B"/>
    <property type="match status" value="2"/>
</dbReference>
<dbReference type="InterPro" id="IPR050271">
    <property type="entry name" value="UDP-glycosyltransferase"/>
</dbReference>
<dbReference type="InterPro" id="IPR002213">
    <property type="entry name" value="UDP_glucos_trans"/>
</dbReference>
<dbReference type="InterPro" id="IPR035595">
    <property type="entry name" value="UDP_glycos_trans_CS"/>
</dbReference>
<dbReference type="PANTHER" id="PTHR48043">
    <property type="entry name" value="EG:EG0003.4 PROTEIN-RELATED"/>
    <property type="match status" value="1"/>
</dbReference>
<dbReference type="PANTHER" id="PTHR48043:SF145">
    <property type="entry name" value="FI06409P-RELATED"/>
    <property type="match status" value="1"/>
</dbReference>
<dbReference type="Pfam" id="PF00201">
    <property type="entry name" value="UDPGT"/>
    <property type="match status" value="1"/>
</dbReference>
<dbReference type="SUPFAM" id="SSF53756">
    <property type="entry name" value="UDP-Glycosyltransferase/glycogen phosphorylase"/>
    <property type="match status" value="1"/>
</dbReference>
<dbReference type="PROSITE" id="PS00375">
    <property type="entry name" value="UDPGT"/>
    <property type="match status" value="1"/>
</dbReference>
<accession>P21686</accession>
<evidence type="ECO:0000305" key="1"/>
<organism>
    <name type="scientific">Pantoea ananas</name>
    <name type="common">Erwinia uredovora</name>
    <dbReference type="NCBI Taxonomy" id="553"/>
    <lineage>
        <taxon>Bacteria</taxon>
        <taxon>Pseudomonadati</taxon>
        <taxon>Pseudomonadota</taxon>
        <taxon>Gammaproteobacteria</taxon>
        <taxon>Enterobacterales</taxon>
        <taxon>Erwiniaceae</taxon>
        <taxon>Pantoea</taxon>
    </lineage>
</organism>
<protein>
    <recommendedName>
        <fullName>Zeaxanthin glucosyltransferase</fullName>
        <ecNumber>2.4.1.276</ecNumber>
    </recommendedName>
</protein>